<comment type="function">
    <text evidence="1">Involved in the biosynthesis of branched-chain amino acids (BCAA). Catalyzes an alkyl-migration followed by a ketol-acid reduction of (S)-2-acetolactate (S2AL) to yield (R)-2,3-dihydroxy-isovalerate. In the isomerase reaction, S2AL is rearranged via a Mg-dependent methyl migration to produce 3-hydroxy-3-methyl-2-ketobutyrate (HMKB). In the reductase reaction, this 2-ketoacid undergoes a metal-dependent reduction by NADPH to yield (R)-2,3-dihydroxy-isovalerate.</text>
</comment>
<comment type="catalytic activity">
    <reaction evidence="1">
        <text>(2R)-2,3-dihydroxy-3-methylbutanoate + NADP(+) = (2S)-2-acetolactate + NADPH + H(+)</text>
        <dbReference type="Rhea" id="RHEA:22068"/>
        <dbReference type="ChEBI" id="CHEBI:15378"/>
        <dbReference type="ChEBI" id="CHEBI:49072"/>
        <dbReference type="ChEBI" id="CHEBI:57783"/>
        <dbReference type="ChEBI" id="CHEBI:58349"/>
        <dbReference type="ChEBI" id="CHEBI:58476"/>
        <dbReference type="EC" id="1.1.1.86"/>
    </reaction>
</comment>
<comment type="catalytic activity">
    <reaction evidence="1">
        <text>(2R,3R)-2,3-dihydroxy-3-methylpentanoate + NADP(+) = (S)-2-ethyl-2-hydroxy-3-oxobutanoate + NADPH + H(+)</text>
        <dbReference type="Rhea" id="RHEA:13493"/>
        <dbReference type="ChEBI" id="CHEBI:15378"/>
        <dbReference type="ChEBI" id="CHEBI:49256"/>
        <dbReference type="ChEBI" id="CHEBI:49258"/>
        <dbReference type="ChEBI" id="CHEBI:57783"/>
        <dbReference type="ChEBI" id="CHEBI:58349"/>
        <dbReference type="EC" id="1.1.1.86"/>
    </reaction>
</comment>
<comment type="cofactor">
    <cofactor evidence="1">
        <name>Mg(2+)</name>
        <dbReference type="ChEBI" id="CHEBI:18420"/>
    </cofactor>
    <text evidence="1">Binds 2 magnesium ions per subunit.</text>
</comment>
<comment type="pathway">
    <text evidence="1">Amino-acid biosynthesis; L-isoleucine biosynthesis; L-isoleucine from 2-oxobutanoate: step 2/4.</text>
</comment>
<comment type="pathway">
    <text evidence="1">Amino-acid biosynthesis; L-valine biosynthesis; L-valine from pyruvate: step 2/4.</text>
</comment>
<comment type="similarity">
    <text evidence="1">Belongs to the ketol-acid reductoisomerase family.</text>
</comment>
<sequence length="339" mass="37279">MRVYYDRDADMNLIKGKKVAIVGYGSQGRAHALNLKDSGVQNVQIALRSGSETVKKATADGFEVVSVAEAAKWADLIMMATPDELQADIYKEHIHDHLRDGAAVAFAHGLSIHFGLIEPKKTVDVVMIAPKGPGHTVRHEYQRGCGVPCLIAVAQDASGHAHSVALSYACGLGGGRAGVIETTFKEECETDLFGEQAVLCGGLVELIRAGYETLTQAGYAPEMAYFECLHEVKLIVDLMYEGGISNMNYSISNTAEWGEYMSGPRVITDETRAEMKRILKDIQTGKFTSNWIQEYKAGAAHFKSMRRLNDNHPIEEVGKKLRSMMPWIKSNALVDKERN</sequence>
<dbReference type="EC" id="1.1.1.86" evidence="1"/>
<dbReference type="EMBL" id="AM260525">
    <property type="protein sequence ID" value="CAK01894.1"/>
    <property type="molecule type" value="Genomic_DNA"/>
</dbReference>
<dbReference type="RefSeq" id="WP_012232023.1">
    <property type="nucleotide sequence ID" value="NC_010161.1"/>
</dbReference>
<dbReference type="SMR" id="A9IW67"/>
<dbReference type="KEGG" id="btr:BT_1549"/>
<dbReference type="eggNOG" id="COG0059">
    <property type="taxonomic scope" value="Bacteria"/>
</dbReference>
<dbReference type="HOGENOM" id="CLU_033821_0_1_5"/>
<dbReference type="UniPathway" id="UPA00047">
    <property type="reaction ID" value="UER00056"/>
</dbReference>
<dbReference type="UniPathway" id="UPA00049">
    <property type="reaction ID" value="UER00060"/>
</dbReference>
<dbReference type="Proteomes" id="UP000001592">
    <property type="component" value="Chromosome"/>
</dbReference>
<dbReference type="GO" id="GO:0005829">
    <property type="term" value="C:cytosol"/>
    <property type="evidence" value="ECO:0007669"/>
    <property type="project" value="TreeGrafter"/>
</dbReference>
<dbReference type="GO" id="GO:0004455">
    <property type="term" value="F:ketol-acid reductoisomerase activity"/>
    <property type="evidence" value="ECO:0007669"/>
    <property type="project" value="UniProtKB-UniRule"/>
</dbReference>
<dbReference type="GO" id="GO:0000287">
    <property type="term" value="F:magnesium ion binding"/>
    <property type="evidence" value="ECO:0007669"/>
    <property type="project" value="UniProtKB-UniRule"/>
</dbReference>
<dbReference type="GO" id="GO:0050661">
    <property type="term" value="F:NADP binding"/>
    <property type="evidence" value="ECO:0007669"/>
    <property type="project" value="InterPro"/>
</dbReference>
<dbReference type="GO" id="GO:0009097">
    <property type="term" value="P:isoleucine biosynthetic process"/>
    <property type="evidence" value="ECO:0007669"/>
    <property type="project" value="UniProtKB-UniRule"/>
</dbReference>
<dbReference type="GO" id="GO:0009099">
    <property type="term" value="P:L-valine biosynthetic process"/>
    <property type="evidence" value="ECO:0007669"/>
    <property type="project" value="UniProtKB-UniRule"/>
</dbReference>
<dbReference type="FunFam" id="3.40.50.720:FF:000023">
    <property type="entry name" value="Ketol-acid reductoisomerase (NADP(+))"/>
    <property type="match status" value="1"/>
</dbReference>
<dbReference type="Gene3D" id="6.10.240.10">
    <property type="match status" value="1"/>
</dbReference>
<dbReference type="Gene3D" id="3.40.50.720">
    <property type="entry name" value="NAD(P)-binding Rossmann-like Domain"/>
    <property type="match status" value="1"/>
</dbReference>
<dbReference type="HAMAP" id="MF_00435">
    <property type="entry name" value="IlvC"/>
    <property type="match status" value="1"/>
</dbReference>
<dbReference type="InterPro" id="IPR008927">
    <property type="entry name" value="6-PGluconate_DH-like_C_sf"/>
</dbReference>
<dbReference type="InterPro" id="IPR013023">
    <property type="entry name" value="KARI"/>
</dbReference>
<dbReference type="InterPro" id="IPR000506">
    <property type="entry name" value="KARI_C"/>
</dbReference>
<dbReference type="InterPro" id="IPR013116">
    <property type="entry name" value="KARI_N"/>
</dbReference>
<dbReference type="InterPro" id="IPR014359">
    <property type="entry name" value="KARI_prok"/>
</dbReference>
<dbReference type="InterPro" id="IPR036291">
    <property type="entry name" value="NAD(P)-bd_dom_sf"/>
</dbReference>
<dbReference type="NCBIfam" id="TIGR00465">
    <property type="entry name" value="ilvC"/>
    <property type="match status" value="1"/>
</dbReference>
<dbReference type="NCBIfam" id="NF004017">
    <property type="entry name" value="PRK05479.1"/>
    <property type="match status" value="1"/>
</dbReference>
<dbReference type="NCBIfam" id="NF009940">
    <property type="entry name" value="PRK13403.1"/>
    <property type="match status" value="1"/>
</dbReference>
<dbReference type="PANTHER" id="PTHR21371">
    <property type="entry name" value="KETOL-ACID REDUCTOISOMERASE, MITOCHONDRIAL"/>
    <property type="match status" value="1"/>
</dbReference>
<dbReference type="PANTHER" id="PTHR21371:SF1">
    <property type="entry name" value="KETOL-ACID REDUCTOISOMERASE, MITOCHONDRIAL"/>
    <property type="match status" value="1"/>
</dbReference>
<dbReference type="Pfam" id="PF01450">
    <property type="entry name" value="KARI_C"/>
    <property type="match status" value="1"/>
</dbReference>
<dbReference type="Pfam" id="PF07991">
    <property type="entry name" value="KARI_N"/>
    <property type="match status" value="1"/>
</dbReference>
<dbReference type="PIRSF" id="PIRSF000116">
    <property type="entry name" value="IlvC_gammaproteo"/>
    <property type="match status" value="1"/>
</dbReference>
<dbReference type="SUPFAM" id="SSF48179">
    <property type="entry name" value="6-phosphogluconate dehydrogenase C-terminal domain-like"/>
    <property type="match status" value="1"/>
</dbReference>
<dbReference type="SUPFAM" id="SSF51735">
    <property type="entry name" value="NAD(P)-binding Rossmann-fold domains"/>
    <property type="match status" value="1"/>
</dbReference>
<dbReference type="PROSITE" id="PS51851">
    <property type="entry name" value="KARI_C"/>
    <property type="match status" value="1"/>
</dbReference>
<dbReference type="PROSITE" id="PS51850">
    <property type="entry name" value="KARI_N"/>
    <property type="match status" value="1"/>
</dbReference>
<reference key="1">
    <citation type="journal article" date="2007" name="Nat. Genet.">
        <title>Genomic analysis of Bartonella identifies type IV secretion systems as host adaptability factors.</title>
        <authorList>
            <person name="Saenz H.L."/>
            <person name="Engel P."/>
            <person name="Stoeckli M.C."/>
            <person name="Lanz C."/>
            <person name="Raddatz G."/>
            <person name="Vayssier-Taussat M."/>
            <person name="Birtles R."/>
            <person name="Schuster S.C."/>
            <person name="Dehio C."/>
        </authorList>
    </citation>
    <scope>NUCLEOTIDE SEQUENCE [LARGE SCALE GENOMIC DNA]</scope>
    <source>
        <strain>CIP 105476 / IBS 506</strain>
    </source>
</reference>
<feature type="chain" id="PRO_1000080618" description="Ketol-acid reductoisomerase (NADP(+))">
    <location>
        <begin position="1"/>
        <end position="339"/>
    </location>
</feature>
<feature type="domain" description="KARI N-terminal Rossmann" evidence="2">
    <location>
        <begin position="1"/>
        <end position="182"/>
    </location>
</feature>
<feature type="domain" description="KARI C-terminal knotted" evidence="3">
    <location>
        <begin position="183"/>
        <end position="328"/>
    </location>
</feature>
<feature type="active site" evidence="1">
    <location>
        <position position="108"/>
    </location>
</feature>
<feature type="binding site" evidence="1">
    <location>
        <begin position="24"/>
        <end position="27"/>
    </location>
    <ligand>
        <name>NADP(+)</name>
        <dbReference type="ChEBI" id="CHEBI:58349"/>
    </ligand>
</feature>
<feature type="binding site" evidence="1">
    <location>
        <position position="48"/>
    </location>
    <ligand>
        <name>NADP(+)</name>
        <dbReference type="ChEBI" id="CHEBI:58349"/>
    </ligand>
</feature>
<feature type="binding site" evidence="1">
    <location>
        <position position="51"/>
    </location>
    <ligand>
        <name>NADP(+)</name>
        <dbReference type="ChEBI" id="CHEBI:58349"/>
    </ligand>
</feature>
<feature type="binding site" evidence="1">
    <location>
        <position position="53"/>
    </location>
    <ligand>
        <name>NADP(+)</name>
        <dbReference type="ChEBI" id="CHEBI:58349"/>
    </ligand>
</feature>
<feature type="binding site" evidence="1">
    <location>
        <begin position="83"/>
        <end position="86"/>
    </location>
    <ligand>
        <name>NADP(+)</name>
        <dbReference type="ChEBI" id="CHEBI:58349"/>
    </ligand>
</feature>
<feature type="binding site" evidence="1">
    <location>
        <position position="134"/>
    </location>
    <ligand>
        <name>NADP(+)</name>
        <dbReference type="ChEBI" id="CHEBI:58349"/>
    </ligand>
</feature>
<feature type="binding site" evidence="1">
    <location>
        <position position="191"/>
    </location>
    <ligand>
        <name>Mg(2+)</name>
        <dbReference type="ChEBI" id="CHEBI:18420"/>
        <label>1</label>
    </ligand>
</feature>
<feature type="binding site" evidence="1">
    <location>
        <position position="191"/>
    </location>
    <ligand>
        <name>Mg(2+)</name>
        <dbReference type="ChEBI" id="CHEBI:18420"/>
        <label>2</label>
    </ligand>
</feature>
<feature type="binding site" evidence="1">
    <location>
        <position position="195"/>
    </location>
    <ligand>
        <name>Mg(2+)</name>
        <dbReference type="ChEBI" id="CHEBI:18420"/>
        <label>1</label>
    </ligand>
</feature>
<feature type="binding site" evidence="1">
    <location>
        <position position="227"/>
    </location>
    <ligand>
        <name>Mg(2+)</name>
        <dbReference type="ChEBI" id="CHEBI:18420"/>
        <label>2</label>
    </ligand>
</feature>
<feature type="binding site" evidence="1">
    <location>
        <position position="231"/>
    </location>
    <ligand>
        <name>Mg(2+)</name>
        <dbReference type="ChEBI" id="CHEBI:18420"/>
        <label>2</label>
    </ligand>
</feature>
<feature type="binding site" evidence="1">
    <location>
        <position position="252"/>
    </location>
    <ligand>
        <name>substrate</name>
    </ligand>
</feature>
<name>ILVC_BART1</name>
<accession>A9IW67</accession>
<protein>
    <recommendedName>
        <fullName evidence="1">Ketol-acid reductoisomerase (NADP(+))</fullName>
        <shortName evidence="1">KARI</shortName>
        <ecNumber evidence="1">1.1.1.86</ecNumber>
    </recommendedName>
    <alternativeName>
        <fullName evidence="1">Acetohydroxy-acid isomeroreductase</fullName>
        <shortName evidence="1">AHIR</shortName>
    </alternativeName>
    <alternativeName>
        <fullName evidence="1">Alpha-keto-beta-hydroxylacyl reductoisomerase</fullName>
    </alternativeName>
    <alternativeName>
        <fullName evidence="1">Ketol-acid reductoisomerase type 1</fullName>
    </alternativeName>
    <alternativeName>
        <fullName evidence="1">Ketol-acid reductoisomerase type I</fullName>
    </alternativeName>
</protein>
<proteinExistence type="inferred from homology"/>
<organism>
    <name type="scientific">Bartonella tribocorum (strain CIP 105476 / IBS 506)</name>
    <dbReference type="NCBI Taxonomy" id="382640"/>
    <lineage>
        <taxon>Bacteria</taxon>
        <taxon>Pseudomonadati</taxon>
        <taxon>Pseudomonadota</taxon>
        <taxon>Alphaproteobacteria</taxon>
        <taxon>Hyphomicrobiales</taxon>
        <taxon>Bartonellaceae</taxon>
        <taxon>Bartonella</taxon>
    </lineage>
</organism>
<keyword id="KW-0028">Amino-acid biosynthesis</keyword>
<keyword id="KW-0100">Branched-chain amino acid biosynthesis</keyword>
<keyword id="KW-0460">Magnesium</keyword>
<keyword id="KW-0479">Metal-binding</keyword>
<keyword id="KW-0521">NADP</keyword>
<keyword id="KW-0560">Oxidoreductase</keyword>
<gene>
    <name evidence="1" type="primary">ilvC</name>
    <name type="ordered locus">BT_1549</name>
</gene>
<evidence type="ECO:0000255" key="1">
    <source>
        <dbReference type="HAMAP-Rule" id="MF_00435"/>
    </source>
</evidence>
<evidence type="ECO:0000255" key="2">
    <source>
        <dbReference type="PROSITE-ProRule" id="PRU01197"/>
    </source>
</evidence>
<evidence type="ECO:0000255" key="3">
    <source>
        <dbReference type="PROSITE-ProRule" id="PRU01198"/>
    </source>
</evidence>